<accession>Q94424</accession>
<comment type="subcellular location">
    <subcellularLocation>
        <location>Secreted</location>
    </subcellularLocation>
</comment>
<comment type="allergen">
    <text>Causes an allergic reaction in human.</text>
</comment>
<keyword id="KW-0020">Allergen</keyword>
<keyword id="KW-0964">Secreted</keyword>
<keyword id="KW-0732">Signal</keyword>
<feature type="signal peptide">
    <location>
        <begin position="1"/>
        <end position="18"/>
    </location>
</feature>
<feature type="chain" id="PRO_0000021037" description="Salivary antigen 1">
    <location>
        <begin position="19"/>
        <end position="176"/>
    </location>
</feature>
<organism>
    <name type="scientific">Ctenocephalides felis</name>
    <name type="common">Cat flea</name>
    <dbReference type="NCBI Taxonomy" id="7515"/>
    <lineage>
        <taxon>Eukaryota</taxon>
        <taxon>Metazoa</taxon>
        <taxon>Ecdysozoa</taxon>
        <taxon>Arthropoda</taxon>
        <taxon>Hexapoda</taxon>
        <taxon>Insecta</taxon>
        <taxon>Pterygota</taxon>
        <taxon>Neoptera</taxon>
        <taxon>Endopterygota</taxon>
        <taxon>Siphonaptera</taxon>
        <taxon>Pulicidae</taxon>
        <taxon>Archaeopsyllinae</taxon>
        <taxon>Ctenocephalides</taxon>
    </lineage>
</organism>
<reference key="1">
    <citation type="book" date="1998" name="Advances in veterinary dermatology">
        <title>Salivary antigens of Ctenocephalides felis: collection, purification and evaluation by intradermal skin testing in dogs.</title>
        <editorList>
            <person name="Kwochka K."/>
            <person name="Von Tscharner C."/>
            <person name="Willemse T."/>
        </editorList>
        <authorList>
            <person name="Frank G.R."/>
            <person name="Hunter S.W."/>
            <person name="Wallenfels L.J."/>
            <person name="Kwochka K."/>
        </authorList>
    </citation>
    <scope>NUCLEOTIDE SEQUENCE [MRNA]</scope>
</reference>
<reference key="2">
    <citation type="submission" date="1998-10" db="EMBL/GenBank/DDBJ databases">
        <title>Cte f 1, Ctenocephalides felis salivary allergen 1.</title>
        <authorList>
            <person name="Weber E.R."/>
            <person name="Sampson C.M."/>
            <person name="Frank G.R."/>
        </authorList>
    </citation>
    <scope>NUCLEOTIDE SEQUENCE [MRNA] OF 5-176</scope>
</reference>
<proteinExistence type="evidence at protein level"/>
<dbReference type="EMBL" id="AF102502">
    <property type="protein sequence ID" value="AAD17905.1"/>
    <property type="molecule type" value="mRNA"/>
</dbReference>
<dbReference type="EMBL" id="U63555">
    <property type="protein sequence ID" value="AAC69105.1"/>
    <property type="molecule type" value="mRNA"/>
</dbReference>
<dbReference type="SMR" id="Q94424"/>
<dbReference type="Allergome" id="252">
    <property type="allergen name" value="Cte f 1"/>
</dbReference>
<dbReference type="Allergome" id="3226">
    <property type="allergen name" value="Cte f 1.0101"/>
</dbReference>
<dbReference type="GO" id="GO:0005576">
    <property type="term" value="C:extracellular region"/>
    <property type="evidence" value="ECO:0007669"/>
    <property type="project" value="UniProtKB-SubCell"/>
</dbReference>
<name>CTF1_CTEFE</name>
<protein>
    <recommendedName>
        <fullName>Salivary antigen 1</fullName>
    </recommendedName>
    <alternativeName>
        <fullName>FS-I</fullName>
    </alternativeName>
    <allergenName>Cte f 1</allergenName>
</protein>
<sequence>MNYCFLVFLVYLVFAVNGEDIWKVNKKCTSGGKNQDRKLDQIIQKGQQVKIQNICKLIRDKPHTNQEKEKCMKFCKKVCKGYRGACDGNICYCSRPSNLGPDWKVSKECKDPNNKDSRPTEIVPYRQQLAIPNICKLKNSETNEDSKCKKHCKEKCRGGNDAGCDGNFCYCRPKNK</sequence>